<proteinExistence type="inferred from homology"/>
<feature type="chain" id="PRO_0000325199" description="DNA repair protein RecO">
    <location>
        <begin position="1"/>
        <end position="235"/>
    </location>
</feature>
<dbReference type="EMBL" id="CP000653">
    <property type="protein sequence ID" value="ABP61716.1"/>
    <property type="status" value="ALT_INIT"/>
    <property type="molecule type" value="Genomic_DNA"/>
</dbReference>
<dbReference type="RefSeq" id="WP_041689706.1">
    <property type="nucleotide sequence ID" value="NC_009436.1"/>
</dbReference>
<dbReference type="SMR" id="A4WDD6"/>
<dbReference type="STRING" id="399742.Ent638_3052"/>
<dbReference type="GeneID" id="93305993"/>
<dbReference type="KEGG" id="ent:Ent638_3052"/>
<dbReference type="eggNOG" id="COG1381">
    <property type="taxonomic scope" value="Bacteria"/>
</dbReference>
<dbReference type="HOGENOM" id="CLU_066645_1_0_6"/>
<dbReference type="OrthoDB" id="9804792at2"/>
<dbReference type="Proteomes" id="UP000000230">
    <property type="component" value="Chromosome"/>
</dbReference>
<dbReference type="GO" id="GO:0043590">
    <property type="term" value="C:bacterial nucleoid"/>
    <property type="evidence" value="ECO:0007669"/>
    <property type="project" value="TreeGrafter"/>
</dbReference>
<dbReference type="GO" id="GO:0006310">
    <property type="term" value="P:DNA recombination"/>
    <property type="evidence" value="ECO:0007669"/>
    <property type="project" value="UniProtKB-UniRule"/>
</dbReference>
<dbReference type="GO" id="GO:0006302">
    <property type="term" value="P:double-strand break repair"/>
    <property type="evidence" value="ECO:0007669"/>
    <property type="project" value="TreeGrafter"/>
</dbReference>
<dbReference type="FunFam" id="2.40.50.140:FF:000074">
    <property type="entry name" value="DNA repair protein RecO"/>
    <property type="match status" value="1"/>
</dbReference>
<dbReference type="Gene3D" id="2.40.50.140">
    <property type="entry name" value="Nucleic acid-binding proteins"/>
    <property type="match status" value="1"/>
</dbReference>
<dbReference type="Gene3D" id="1.20.1440.120">
    <property type="entry name" value="Recombination protein O, C-terminal domain"/>
    <property type="match status" value="1"/>
</dbReference>
<dbReference type="HAMAP" id="MF_00201">
    <property type="entry name" value="RecO"/>
    <property type="match status" value="1"/>
</dbReference>
<dbReference type="InterPro" id="IPR037278">
    <property type="entry name" value="ARFGAP/RecO"/>
</dbReference>
<dbReference type="InterPro" id="IPR022572">
    <property type="entry name" value="DNA_rep/recomb_RecO_N"/>
</dbReference>
<dbReference type="InterPro" id="IPR012340">
    <property type="entry name" value="NA-bd_OB-fold"/>
</dbReference>
<dbReference type="InterPro" id="IPR003717">
    <property type="entry name" value="RecO"/>
</dbReference>
<dbReference type="InterPro" id="IPR042242">
    <property type="entry name" value="RecO_C"/>
</dbReference>
<dbReference type="NCBIfam" id="TIGR00613">
    <property type="entry name" value="reco"/>
    <property type="match status" value="1"/>
</dbReference>
<dbReference type="PANTHER" id="PTHR33991">
    <property type="entry name" value="DNA REPAIR PROTEIN RECO"/>
    <property type="match status" value="1"/>
</dbReference>
<dbReference type="PANTHER" id="PTHR33991:SF1">
    <property type="entry name" value="DNA REPAIR PROTEIN RECO"/>
    <property type="match status" value="1"/>
</dbReference>
<dbReference type="Pfam" id="PF02565">
    <property type="entry name" value="RecO_C"/>
    <property type="match status" value="1"/>
</dbReference>
<dbReference type="Pfam" id="PF11967">
    <property type="entry name" value="RecO_N"/>
    <property type="match status" value="1"/>
</dbReference>
<dbReference type="SUPFAM" id="SSF57863">
    <property type="entry name" value="ArfGap/RecO-like zinc finger"/>
    <property type="match status" value="1"/>
</dbReference>
<dbReference type="SUPFAM" id="SSF50249">
    <property type="entry name" value="Nucleic acid-binding proteins"/>
    <property type="match status" value="1"/>
</dbReference>
<organism>
    <name type="scientific">Enterobacter sp. (strain 638)</name>
    <dbReference type="NCBI Taxonomy" id="399742"/>
    <lineage>
        <taxon>Bacteria</taxon>
        <taxon>Pseudomonadati</taxon>
        <taxon>Pseudomonadota</taxon>
        <taxon>Gammaproteobacteria</taxon>
        <taxon>Enterobacterales</taxon>
        <taxon>Enterobacteriaceae</taxon>
        <taxon>Enterobacter</taxon>
    </lineage>
</organism>
<reference key="1">
    <citation type="journal article" date="2010" name="PLoS Genet.">
        <title>Genome sequence of the plant growth promoting endophytic bacterium Enterobacter sp. 638.</title>
        <authorList>
            <person name="Taghavi S."/>
            <person name="van der Lelie D."/>
            <person name="Hoffman A."/>
            <person name="Zhang Y.B."/>
            <person name="Walla M.D."/>
            <person name="Vangronsveld J."/>
            <person name="Newman L."/>
            <person name="Monchy S."/>
        </authorList>
    </citation>
    <scope>NUCLEOTIDE SEQUENCE [LARGE SCALE GENOMIC DNA]</scope>
    <source>
        <strain>638</strain>
    </source>
</reference>
<accession>A4WDD6</accession>
<name>RECO_ENT38</name>
<sequence>MEGWQRAFVLHSRPWSETSLMLDVFTEESGRVRLVAKGARSKRSNLKGALQPFTPLLVRFGGRGEVKTLRSAEAVSLALPLSGITLYSGLYVNELISRVLEHETRFSELFFDYLHCIQALAGATDSPEPALRRFELALLGHLGYGVDFLHCAGSGDSVDDTMTYRYREEKGFIASIVIDNTTFTGRHLRALSEREFPDQDTLRAAKRFTRIALKPYLGGKPLKSRELFRQFVPKR</sequence>
<gene>
    <name evidence="1" type="primary">recO</name>
    <name type="ordered locus">Ent638_3052</name>
</gene>
<keyword id="KW-0227">DNA damage</keyword>
<keyword id="KW-0233">DNA recombination</keyword>
<keyword id="KW-0234">DNA repair</keyword>
<protein>
    <recommendedName>
        <fullName evidence="1">DNA repair protein RecO</fullName>
    </recommendedName>
    <alternativeName>
        <fullName evidence="1">Recombination protein O</fullName>
    </alternativeName>
</protein>
<evidence type="ECO:0000255" key="1">
    <source>
        <dbReference type="HAMAP-Rule" id="MF_00201"/>
    </source>
</evidence>
<evidence type="ECO:0000305" key="2"/>
<comment type="function">
    <text evidence="1">Involved in DNA repair and RecF pathway recombination.</text>
</comment>
<comment type="similarity">
    <text evidence="1">Belongs to the RecO family.</text>
</comment>
<comment type="sequence caution" evidence="2">
    <conflict type="erroneous initiation">
        <sequence resource="EMBL-CDS" id="ABP61716"/>
    </conflict>
</comment>